<evidence type="ECO:0000250" key="1">
    <source>
        <dbReference type="UniProtKB" id="P63000"/>
    </source>
</evidence>
<evidence type="ECO:0000250" key="2">
    <source>
        <dbReference type="UniProtKB" id="Q6RUV5"/>
    </source>
</evidence>
<evidence type="ECO:0000255" key="3"/>
<evidence type="ECO:0000269" key="4">
    <source>
    </source>
</evidence>
<evidence type="ECO:0000269" key="5">
    <source>
    </source>
</evidence>
<evidence type="ECO:0000269" key="6">
    <source>
    </source>
</evidence>
<evidence type="ECO:0000269" key="7">
    <source>
    </source>
</evidence>
<evidence type="ECO:0000269" key="8">
    <source>
    </source>
</evidence>
<evidence type="ECO:0000269" key="9">
    <source>
    </source>
</evidence>
<evidence type="ECO:0000269" key="10">
    <source>
    </source>
</evidence>
<evidence type="ECO:0000269" key="11">
    <source>
    </source>
</evidence>
<evidence type="ECO:0000269" key="12">
    <source>
    </source>
</evidence>
<evidence type="ECO:0000269" key="13">
    <source>
    </source>
</evidence>
<evidence type="ECO:0000269" key="14">
    <source>
    </source>
</evidence>
<evidence type="ECO:0000269" key="15">
    <source>
    </source>
</evidence>
<evidence type="ECO:0000269" key="16">
    <source>
    </source>
</evidence>
<evidence type="ECO:0000269" key="17">
    <source>
    </source>
</evidence>
<evidence type="ECO:0000269" key="18">
    <source>
    </source>
</evidence>
<evidence type="ECO:0000269" key="19">
    <source>
    </source>
</evidence>
<evidence type="ECO:0000269" key="20">
    <source>
    </source>
</evidence>
<evidence type="ECO:0000269" key="21">
    <source>
    </source>
</evidence>
<evidence type="ECO:0000269" key="22">
    <source>
    </source>
</evidence>
<evidence type="ECO:0000305" key="23"/>
<evidence type="ECO:0000305" key="24">
    <source>
    </source>
</evidence>
<evidence type="ECO:0000305" key="25">
    <source>
    </source>
</evidence>
<evidence type="ECO:0000312" key="26">
    <source>
        <dbReference type="MGI" id="MGI:97845"/>
    </source>
</evidence>
<comment type="function">
    <text evidence="1 2 7 12 13 20 21">Plasma membrane-associated small GTPase which cycles between active GTP-bound and inactive GDP-bound states (PubMed:24352656). In its active state, binds to a variety of effector proteins to regulate cellular responses such as secretory processes, phagocytosis of apoptotic cells, epithelial cell polarization, neurons adhesion, migration and differentiation, and growth-factor induced formation of membrane ruffles. Rac1 p21/rho GDI heterodimer is the active component of the cytosolic factor sigma 1, which is involved in stimulation of the NADPH oxidase activity in macrophages. Essential for the SPATA13-mediated regulation of cell migration and adhesion assembly and disassembly. Stimulates PKN2 kinase activity. In concert with RAB7A, plays a role in regulating the formation of RBs (ruffled borders) in osteoclasts. In glioma cells, promotes cell migration and invasion. Required for atypical chemokine receptor ACKR2-induced LIMK1-PAK1-dependent phosphorylation of cofilin (CFL1) and for up-regulation of ACKR2 from endosomal compartment to cell membrane, increasing its efficiency in chemokine uptake and degradation. In podocytes, promotes nuclear shuttling of NR3C2; this modulation is required for a proper kidney functioning. In neurons, is involved in dendritic spine formation and synaptic plasticity (PubMed:24352656, PubMed:26969129). In hippocampal neurons, involved in spine morphogenesis and synapse formation, through local activation at synapses by guanine nucleotide exchange factors (GEFs), such as ARHGEF6/ARHGEF7/PIX (PubMed:12695502). In synapses, seems to mediate the regulation of F-actin cluster formation performed by SHANK3. In neurons, plays a crucial role in regulating GABA(A) receptor synaptic stability and hence GABAergic inhibitory synaptic transmission through its role in PAK1 activation and eventually F-actin stabilization (By similarity). Required for DSG3 translocation to cell-cell junctions, DSG3-mediated organization of cortical F-actin bundles and anchoring of actin at cell junctions; via interaction with DSG3 (By similarity). Subunit of the phagocyte NADPH oxidase complex that mediates the transfer of electrons from cytosolic NADPH to O2 to produce the superoxide anion (O2(-)) (By similarity).</text>
</comment>
<comment type="catalytic activity">
    <reaction evidence="20 21">
        <text>GTP + H2O = GDP + phosphate + H(+)</text>
        <dbReference type="Rhea" id="RHEA:19669"/>
        <dbReference type="ChEBI" id="CHEBI:15377"/>
        <dbReference type="ChEBI" id="CHEBI:15378"/>
        <dbReference type="ChEBI" id="CHEBI:37565"/>
        <dbReference type="ChEBI" id="CHEBI:43474"/>
        <dbReference type="ChEBI" id="CHEBI:58189"/>
        <dbReference type="EC" id="3.6.5.2"/>
    </reaction>
    <physiologicalReaction direction="left-to-right" evidence="24 25">
        <dbReference type="Rhea" id="RHEA:19670"/>
    </physiologicalReaction>
</comment>
<comment type="activity regulation">
    <text evidence="20 21">Regulated by guanine nucleotide exchange factors (GEFs) which promote the exchange of bound GDP for free GTP, GTPase activating proteins (GAPs) which increase the GTP hydrolysis activity, and GDP dissociation inhibitors which inhibit the dissociation of the nucleotide from the GTPase. GTP hydrolysis is stimulated by ARHGAP30 and ARHGAP44.</text>
</comment>
<comment type="subunit">
    <text evidence="1 2 4 5 6 8 9 11 15 16 17 18 19 22">Interacts with the GEF proteins PREX1, FARP1, FARP2, DOCK1, DOCK2 and DOCK7, which promote the exchange between GDP and GTP, and therefore activate it. Part of a quaternary complex containing PARD3, some PARD6 protein (PARD6A, PARD6B or PARD6G) and some atypical PKC protein (PRKCI or PRKCZ), which plays a central role in epithelial cell polarization. Found in a trimeric complex composed of DOCK1 and ELMO1, which plays a central role in phagocytosis of apoptotic cells. Interacts with RALBP1 via its effector domain. Interacts with BAIAP2, BAIAP2L1, PLXNB1, CYFIP1/SRA-1 and DEF6. Interacts with TBC1D2. Interacts with UNKL. Interacts with USP6. Interacts with SPATA13. Interacts with ITGB4. Interacts with the GTP-bound form of RAB7A. Interacts with ARHGEF2. Interacts with ARHGEF16; mediates activation of RAC1 by EPHA2. Interacts with NOXA1. Interacts with S100A8 and calprotectin (S100A8/9). Interacts with ARHGDIA; the interaction is induced by SEMA5A, mediated through PLXNB3 and inactivates and stabilizes RAC1. Interacts with PACSIN2. Interacts with ITGB1BP1 (By similarity). Interacts with the GEF protein RASGRF2, which promotes the exchange between GDP and GTP, and therefore activates it. Interacts with PARD6A, PARD6B and PARD6G in a GTP-dependent manner. Part of a complex with MAP2K3, MAP3K3 and CCM2. Interacts with NISCH. Interacts with PIP5K1A. Interacts (GTP-bound form preferentially) with PKN2 (via the REM repeats); the interaction stimulates autophosphorylation and phosphorylation of PKN2. Interacts with SRGAP2. Interacts with PLXNB3. Interacts (when active) with PPP5C (via TPR repeats); activates PPP5C phosphatase activity and translocates PPP5C to the cell membrane. Interacts with RAPH1 (via Ras associating and PH domains) (By similarity). Interacts with MTSS2 (via IMD domain); this interaction may be important to potentiate PDGF-induced RAC1 activation. Interacts (GTP-bound form) with SH3RF3. Interacts with PAK2 (By similarity). Interacts (GTP-bound form) with SH3RF1 (PubMed:22959435). Found in a complex with SH3RF1, MAPK8IP1/JIP1, MAP3K11/MLK3, MAP2K7/MKK7 and MAPK8/JNK1 (PubMed:23963642). Interacts (both active GTP- or inactive GDP-bound forms) with SH3RF2 (By similarity). Interacts (GTP-bound form preferentially) with CYRIB (By similarity). Interacts with DOCK4 (via DOCKER domain); functions as a guanine nucleotide exchange factor (GEF) for RAC1 (By similarity). Interacts with GARRE1 (By similarity). Interacts with RAP1GDS1 (By similarity). Interacts with TNFAIP8L2 (By similarity). May interact with ARHGAP36 (By similarity). Interacts with CD151 and ITGB1 (By similarity). Interacts with DSG3; the interaction is required for DSG3 translocation to cell-cell junctions, organization of cortical F-actin bundles and actin anchoring at cell-cell junctions (By similarity). Component of the phagocyte NADPH oxidase complex composed of an obligatory core heterodimer formed by the membrane proteins CYBA and CYBB and the cytosolic regulatory subunits NCF1/p47-phox, NCF2/p67-phox, NCF4/p40-phox and the small GTPase RAC1 or RAC2. Interacts with NCF2 (By similarity).</text>
</comment>
<comment type="interaction">
    <interactant intactId="EBI-413646">
        <id>P63001</id>
    </interactant>
    <interactant intactId="EBI-300895">
        <id>Q62108</id>
        <label>Dlg4</label>
    </interactant>
    <organismsDiffer>false</organismsDiffer>
    <experiments>3</experiments>
</comment>
<comment type="interaction">
    <interactant intactId="EBI-413646">
        <id>P63001</id>
    </interactant>
    <interactant intactId="EBI-1635090">
        <id>P08228</id>
        <label>Sod1</label>
    </interactant>
    <organismsDiffer>false</organismsDiffer>
    <experiments>4</experiments>
</comment>
<comment type="interaction">
    <interactant intactId="EBI-413646">
        <id>P63001</id>
    </interactant>
    <interactant intactId="EBI-1307">
        <id>Q13153</id>
        <label>PAK1</label>
    </interactant>
    <organismsDiffer>true</organismsDiffer>
    <experiments>3</experiments>
</comment>
<comment type="subcellular location">
    <subcellularLocation>
        <location evidence="1">Cell membrane</location>
        <topology evidence="1">Lipid-anchor</topology>
        <orientation evidence="1">Cytoplasmic side</orientation>
    </subcellularLocation>
    <subcellularLocation>
        <location evidence="1">Melanosome</location>
    </subcellularLocation>
    <subcellularLocation>
        <location evidence="10">Cytoplasm</location>
    </subcellularLocation>
    <subcellularLocation>
        <location evidence="18">Cell projection</location>
        <location evidence="18">Lamellipodium</location>
    </subcellularLocation>
    <subcellularLocation>
        <location evidence="20">Cell projection</location>
        <location evidence="20">Dendrite</location>
    </subcellularLocation>
    <subcellularLocation>
        <location evidence="2">Synapse</location>
    </subcellularLocation>
    <subcellularLocation>
        <location evidence="1">Nucleus</location>
    </subcellularLocation>
    <text evidence="1 10 18">Inner surface of plasma membrane possibly with attachment requiring prenylation of the C-terminal cysteine (By similarity). Found in the ruffled border (a late endosomal-like compartment in the plasma membrane) of bone-resorbing osteoclasts (By similarity). Localizes to the lamellipodium in a SH3RF1-dependent manner. In macrophages, cytoplasmic location increases upon CSF1 stimulation (PubMed:17116687). Activation by GTP-binding promotes nuclear localization (By similarity).</text>
</comment>
<comment type="tissue specificity">
    <text evidence="14">Widely expressed.</text>
</comment>
<comment type="developmental stage">
    <text evidence="18">Expressed in the neocortical neurons in the developing brain.</text>
</comment>
<comment type="domain">
    <text evidence="1">The effector region mediates interaction with DEF6.</text>
</comment>
<comment type="PTM">
    <text evidence="1">GTP-bound active form is ubiquitinated at Lys-147 by HACE1, leading to its degradation by the proteasome.</text>
</comment>
<comment type="PTM">
    <text evidence="1">Phosphorylated by AKT at Ser-71.</text>
</comment>
<comment type="PTM">
    <text evidence="1">Ubiquitinated at Lys-166 in a FBXL19-mediated manner; leading to proteasomal degradation.</text>
</comment>
<comment type="disruption phenotype">
    <text evidence="12">Conditional knockout of Rac1 in the telencephalic ventricular zone of embryos leads to primary microcephaly. Self-renewal, survival, and differentiation of telencephalic neural progenitor cells is affected.</text>
</comment>
<comment type="similarity">
    <text evidence="23">Belongs to the small GTPase superfamily. Rho family.</text>
</comment>
<accession>P63001</accession>
<accession>O95501</accession>
<accession>P15154</accession>
<accession>Q9BTB4</accession>
<protein>
    <recommendedName>
        <fullName evidence="23">Ras-related C3 botulinum toxin substrate 1</fullName>
        <ecNumber evidence="20 21">3.6.5.2</ecNumber>
    </recommendedName>
    <alternativeName>
        <fullName>p21-Rac1</fullName>
    </alternativeName>
</protein>
<reference key="1">
    <citation type="journal article" date="1991" name="Oncogene">
        <title>The murine rac1 gene: cDNA cloning, tissue distribution and regulated expression of rac1 mRNA by disassembly of actin microfilaments.</title>
        <authorList>
            <person name="Moll J."/>
            <person name="Sansig G."/>
            <person name="Fattori E."/>
            <person name="van der Putten H."/>
        </authorList>
    </citation>
    <scope>NUCLEOTIDE SEQUENCE [MRNA]</scope>
    <scope>TISSUE SPECIFICITY</scope>
    <source>
        <tissue>Thymus</tissue>
    </source>
</reference>
<reference key="2">
    <citation type="journal article" date="2005" name="Science">
        <title>The transcriptional landscape of the mammalian genome.</title>
        <authorList>
            <person name="Carninci P."/>
            <person name="Kasukawa T."/>
            <person name="Katayama S."/>
            <person name="Gough J."/>
            <person name="Frith M.C."/>
            <person name="Maeda N."/>
            <person name="Oyama R."/>
            <person name="Ravasi T."/>
            <person name="Lenhard B."/>
            <person name="Wells C."/>
            <person name="Kodzius R."/>
            <person name="Shimokawa K."/>
            <person name="Bajic V.B."/>
            <person name="Brenner S.E."/>
            <person name="Batalov S."/>
            <person name="Forrest A.R."/>
            <person name="Zavolan M."/>
            <person name="Davis M.J."/>
            <person name="Wilming L.G."/>
            <person name="Aidinis V."/>
            <person name="Allen J.E."/>
            <person name="Ambesi-Impiombato A."/>
            <person name="Apweiler R."/>
            <person name="Aturaliya R.N."/>
            <person name="Bailey T.L."/>
            <person name="Bansal M."/>
            <person name="Baxter L."/>
            <person name="Beisel K.W."/>
            <person name="Bersano T."/>
            <person name="Bono H."/>
            <person name="Chalk A.M."/>
            <person name="Chiu K.P."/>
            <person name="Choudhary V."/>
            <person name="Christoffels A."/>
            <person name="Clutterbuck D.R."/>
            <person name="Crowe M.L."/>
            <person name="Dalla E."/>
            <person name="Dalrymple B.P."/>
            <person name="de Bono B."/>
            <person name="Della Gatta G."/>
            <person name="di Bernardo D."/>
            <person name="Down T."/>
            <person name="Engstrom P."/>
            <person name="Fagiolini M."/>
            <person name="Faulkner G."/>
            <person name="Fletcher C.F."/>
            <person name="Fukushima T."/>
            <person name="Furuno M."/>
            <person name="Futaki S."/>
            <person name="Gariboldi M."/>
            <person name="Georgii-Hemming P."/>
            <person name="Gingeras T.R."/>
            <person name="Gojobori T."/>
            <person name="Green R.E."/>
            <person name="Gustincich S."/>
            <person name="Harbers M."/>
            <person name="Hayashi Y."/>
            <person name="Hensch T.K."/>
            <person name="Hirokawa N."/>
            <person name="Hill D."/>
            <person name="Huminiecki L."/>
            <person name="Iacono M."/>
            <person name="Ikeo K."/>
            <person name="Iwama A."/>
            <person name="Ishikawa T."/>
            <person name="Jakt M."/>
            <person name="Kanapin A."/>
            <person name="Katoh M."/>
            <person name="Kawasawa Y."/>
            <person name="Kelso J."/>
            <person name="Kitamura H."/>
            <person name="Kitano H."/>
            <person name="Kollias G."/>
            <person name="Krishnan S.P."/>
            <person name="Kruger A."/>
            <person name="Kummerfeld S.K."/>
            <person name="Kurochkin I.V."/>
            <person name="Lareau L.F."/>
            <person name="Lazarevic D."/>
            <person name="Lipovich L."/>
            <person name="Liu J."/>
            <person name="Liuni S."/>
            <person name="McWilliam S."/>
            <person name="Madan Babu M."/>
            <person name="Madera M."/>
            <person name="Marchionni L."/>
            <person name="Matsuda H."/>
            <person name="Matsuzawa S."/>
            <person name="Miki H."/>
            <person name="Mignone F."/>
            <person name="Miyake S."/>
            <person name="Morris K."/>
            <person name="Mottagui-Tabar S."/>
            <person name="Mulder N."/>
            <person name="Nakano N."/>
            <person name="Nakauchi H."/>
            <person name="Ng P."/>
            <person name="Nilsson R."/>
            <person name="Nishiguchi S."/>
            <person name="Nishikawa S."/>
            <person name="Nori F."/>
            <person name="Ohara O."/>
            <person name="Okazaki Y."/>
            <person name="Orlando V."/>
            <person name="Pang K.C."/>
            <person name="Pavan W.J."/>
            <person name="Pavesi G."/>
            <person name="Pesole G."/>
            <person name="Petrovsky N."/>
            <person name="Piazza S."/>
            <person name="Reed J."/>
            <person name="Reid J.F."/>
            <person name="Ring B.Z."/>
            <person name="Ringwald M."/>
            <person name="Rost B."/>
            <person name="Ruan Y."/>
            <person name="Salzberg S.L."/>
            <person name="Sandelin A."/>
            <person name="Schneider C."/>
            <person name="Schoenbach C."/>
            <person name="Sekiguchi K."/>
            <person name="Semple C.A."/>
            <person name="Seno S."/>
            <person name="Sessa L."/>
            <person name="Sheng Y."/>
            <person name="Shibata Y."/>
            <person name="Shimada H."/>
            <person name="Shimada K."/>
            <person name="Silva D."/>
            <person name="Sinclair B."/>
            <person name="Sperling S."/>
            <person name="Stupka E."/>
            <person name="Sugiura K."/>
            <person name="Sultana R."/>
            <person name="Takenaka Y."/>
            <person name="Taki K."/>
            <person name="Tammoja K."/>
            <person name="Tan S.L."/>
            <person name="Tang S."/>
            <person name="Taylor M.S."/>
            <person name="Tegner J."/>
            <person name="Teichmann S.A."/>
            <person name="Ueda H.R."/>
            <person name="van Nimwegen E."/>
            <person name="Verardo R."/>
            <person name="Wei C.L."/>
            <person name="Yagi K."/>
            <person name="Yamanishi H."/>
            <person name="Zabarovsky E."/>
            <person name="Zhu S."/>
            <person name="Zimmer A."/>
            <person name="Hide W."/>
            <person name="Bult C."/>
            <person name="Grimmond S.M."/>
            <person name="Teasdale R.D."/>
            <person name="Liu E.T."/>
            <person name="Brusic V."/>
            <person name="Quackenbush J."/>
            <person name="Wahlestedt C."/>
            <person name="Mattick J.S."/>
            <person name="Hume D.A."/>
            <person name="Kai C."/>
            <person name="Sasaki D."/>
            <person name="Tomaru Y."/>
            <person name="Fukuda S."/>
            <person name="Kanamori-Katayama M."/>
            <person name="Suzuki M."/>
            <person name="Aoki J."/>
            <person name="Arakawa T."/>
            <person name="Iida J."/>
            <person name="Imamura K."/>
            <person name="Itoh M."/>
            <person name="Kato T."/>
            <person name="Kawaji H."/>
            <person name="Kawagashira N."/>
            <person name="Kawashima T."/>
            <person name="Kojima M."/>
            <person name="Kondo S."/>
            <person name="Konno H."/>
            <person name="Nakano K."/>
            <person name="Ninomiya N."/>
            <person name="Nishio T."/>
            <person name="Okada M."/>
            <person name="Plessy C."/>
            <person name="Shibata K."/>
            <person name="Shiraki T."/>
            <person name="Suzuki S."/>
            <person name="Tagami M."/>
            <person name="Waki K."/>
            <person name="Watahiki A."/>
            <person name="Okamura-Oho Y."/>
            <person name="Suzuki H."/>
            <person name="Kawai J."/>
            <person name="Hayashizaki Y."/>
        </authorList>
    </citation>
    <scope>NUCLEOTIDE SEQUENCE [LARGE SCALE MRNA]</scope>
    <source>
        <strain>C57BL/6J</strain>
        <strain>NOD</strain>
        <tissue>Head</tissue>
        <tissue>Liver</tissue>
        <tissue>Thymus</tissue>
        <tissue>Tongue</tissue>
    </source>
</reference>
<reference key="3">
    <citation type="journal article" date="2004" name="Genome Res.">
        <title>The status, quality, and expansion of the NIH full-length cDNA project: the Mammalian Gene Collection (MGC).</title>
        <authorList>
            <consortium name="The MGC Project Team"/>
        </authorList>
    </citation>
    <scope>NUCLEOTIDE SEQUENCE [LARGE SCALE MRNA]</scope>
    <source>
        <strain>Czech II</strain>
        <strain>FVB/N</strain>
        <tissue>Mammary tumor</tissue>
    </source>
</reference>
<reference key="4">
    <citation type="journal article" date="1998" name="Curr. Biol.">
        <title>The exchange factor Ras-GRF2 activates Ras-dependent and Rac-dependent mitogen-activated protein kinase pathways.</title>
        <authorList>
            <person name="Fan W.-T."/>
            <person name="Koch C.A."/>
            <person name="de Hoog C.L."/>
            <person name="Fam N.P."/>
            <person name="Moran M.F."/>
        </authorList>
    </citation>
    <scope>INTERACTION WITH RASGRF2</scope>
</reference>
<reference key="5">
    <citation type="journal article" date="2000" name="Nat. Cell Biol.">
        <title>The cell-polarity protein Par6 links Par3 and atypical protein kinase C to Cdc42.</title>
        <authorList>
            <person name="Joberty G."/>
            <person name="Petersen C."/>
            <person name="Gao L."/>
            <person name="Macara I.G."/>
        </authorList>
    </citation>
    <scope>INTERACTION WITH PARD6A</scope>
    <scope>MUTAGENESIS OF GLY-12</scope>
</reference>
<reference key="6">
    <citation type="journal article" date="2000" name="Nat. Cell Biol.">
        <title>A mammalian PAR-3-PAR-6 complex implicated in Cdc42/Rac1 and aPKC signalling and cell polarity.</title>
        <authorList>
            <person name="Lin D."/>
            <person name="Edwards A.S."/>
            <person name="Fawcett J.P."/>
            <person name="Mbamalu G."/>
            <person name="Scott J.D."/>
            <person name="Pawson T."/>
        </authorList>
    </citation>
    <scope>INTERACTION WITH PARD6B</scope>
</reference>
<reference key="7">
    <citation type="journal article" date="2000" name="Curr. Biol.">
        <title>Type Ialpha phosphatidylinositol-4-phosphate 5-kinase mediates Rac-dependent actin assembly.</title>
        <authorList>
            <person name="Tolias K.F."/>
            <person name="Hartwig J.H."/>
            <person name="Ishihara H."/>
            <person name="Shibasaki Y."/>
            <person name="Cantley L.C."/>
            <person name="Carpenter C.L."/>
        </authorList>
    </citation>
    <scope>INTERACTION WITH PIP5K1A</scope>
</reference>
<reference key="8">
    <citation type="journal article" date="2003" name="J. Cell Biol.">
        <title>Synapse formation is regulated by the signaling adaptor GIT1.</title>
        <authorList>
            <person name="Zhang H."/>
            <person name="Webb D.J."/>
            <person name="Asmussen H."/>
            <person name="Horwitz A.F."/>
        </authorList>
    </citation>
    <scope>FUNCTION</scope>
</reference>
<reference key="9">
    <citation type="journal article" date="2003" name="Nat. Cell Biol.">
        <title>Rac-MEKK3-MKK3 scaffolding for p38 MAPK activation during hyperosmotic shock.</title>
        <authorList>
            <person name="Uhlik M.T."/>
            <person name="Abell A.N."/>
            <person name="Johnson N.L."/>
            <person name="Sun W."/>
            <person name="Cuevas B.D."/>
            <person name="Lobel-Rice K.E."/>
            <person name="Horne E.A."/>
            <person name="Dell'Acqua M.L."/>
            <person name="Johnson G.L."/>
        </authorList>
    </citation>
    <scope>INTERACTION WITH MAP3K3; MAP2K3 AND CCM2</scope>
</reference>
<reference key="10">
    <citation type="journal article" date="2005" name="J. Biol. Chem.">
        <title>Regulation of p21-activated kinase-independent Rac1 signal transduction by Nischarin.</title>
        <authorList>
            <person name="Reddig P.J."/>
            <person name="Xu D."/>
            <person name="Juliano R.L."/>
        </authorList>
    </citation>
    <scope>INTERACTION WITH NISCH</scope>
</reference>
<reference key="11">
    <citation type="journal article" date="2007" name="J. Neurochem.">
        <title>Hyaluronan-CD44 interaction stimulates Rac1 signaling and PKN gamma kinase activation leading to cytoskeleton function and cell migration in astrocytes.</title>
        <authorList>
            <person name="Bourguignon L.Y."/>
            <person name="Gilad E."/>
            <person name="Peyrollier K."/>
            <person name="Brightman A."/>
            <person name="Swanson R.A."/>
        </authorList>
    </citation>
    <scope>INTERACTION WITH PKN2</scope>
</reference>
<reference key="12">
    <citation type="journal article" date="2007" name="Mol. Cell. Biol.">
        <title>Abr and Bcr, two homologous Rac GTPase-activating proteins, control multiple cellular functions of murine macrophages.</title>
        <authorList>
            <person name="Cho Y.J."/>
            <person name="Cunnick J.M."/>
            <person name="Yi S.J."/>
            <person name="Kaartinen V."/>
            <person name="Groffen J."/>
            <person name="Heisterkamp N."/>
        </authorList>
    </citation>
    <scope>SUBCELLULAR LOCATION</scope>
</reference>
<reference key="13">
    <citation type="journal article" date="2008" name="Nat. Med.">
        <title>Modification of mineralocorticoid receptor function by Rac1 GTPase: implication in proteinuric kidney disease.</title>
        <authorList>
            <person name="Shibata S."/>
            <person name="Nagase M."/>
            <person name="Yoshida S."/>
            <person name="Kawarazaki W."/>
            <person name="Kurihara H."/>
            <person name="Tanaka H."/>
            <person name="Miyoshi J."/>
            <person name="Takai Y."/>
            <person name="Fujita T."/>
        </authorList>
    </citation>
    <scope>FUNCTION</scope>
</reference>
<reference key="14">
    <citation type="journal article" date="2009" name="Cell">
        <title>The F-BAR domain of srGAP2 induces membrane protrusions required for neuronal migration and morphogenesis.</title>
        <authorList>
            <person name="Guerrier S."/>
            <person name="Coutinho-Budd J."/>
            <person name="Sassa T."/>
            <person name="Gresset A."/>
            <person name="Jordan N.V."/>
            <person name="Chen K."/>
            <person name="Jin W.L."/>
            <person name="Frost A."/>
            <person name="Polleux F."/>
        </authorList>
    </citation>
    <scope>INTERACTION WITH SRGAP2</scope>
    <scope>ACTIVITY REGULATION</scope>
</reference>
<reference key="15">
    <citation type="journal article" date="2009" name="Dev. Biol.">
        <title>Rac1 deficiency in the forebrain results in neural progenitor reduction and microcephaly.</title>
        <authorList>
            <person name="Chen L."/>
            <person name="Melendez J."/>
            <person name="Campbell K."/>
            <person name="Kuan C.Y."/>
            <person name="Zheng Y."/>
        </authorList>
    </citation>
    <scope>FUNCTION</scope>
    <scope>DISRUPTION PHENOTYPE</scope>
</reference>
<reference key="16">
    <citation type="journal article" date="2010" name="Cell">
        <title>A tissue-specific atlas of mouse protein phosphorylation and expression.</title>
        <authorList>
            <person name="Huttlin E.L."/>
            <person name="Jedrychowski M.P."/>
            <person name="Elias J.E."/>
            <person name="Goswami T."/>
            <person name="Rad R."/>
            <person name="Beausoleil S.A."/>
            <person name="Villen J."/>
            <person name="Haas W."/>
            <person name="Sowa M.E."/>
            <person name="Gygi S.P."/>
        </authorList>
    </citation>
    <scope>IDENTIFICATION BY MASS SPECTROMETRY [LARGE SCALE ANALYSIS]</scope>
    <source>
        <tissue>Brain</tissue>
        <tissue>Brown adipose tissue</tissue>
        <tissue>Heart</tissue>
        <tissue>Kidney</tissue>
        <tissue>Liver</tissue>
        <tissue>Lung</tissue>
        <tissue>Pancreas</tissue>
        <tissue>Spleen</tissue>
        <tissue>Testis</tissue>
    </source>
</reference>
<reference key="17">
    <citation type="journal article" date="2010" name="J. Biol. Chem.">
        <title>Semaphorin 5A and plexin-B3 inhibit human glioma cell motility through RhoGDIalpha-mediated inactivation of Rac1 GTPase.</title>
        <authorList>
            <person name="Li X."/>
            <person name="Lee A.Y."/>
        </authorList>
    </citation>
    <scope>INTERACTION WITH PLXNB3</scope>
</reference>
<reference key="18">
    <citation type="journal article" date="2011" name="Mol. Cell. Biol.">
        <title>The Rho target PRK2 regulates apical junction formation in human bronchial epithelial cells.</title>
        <authorList>
            <person name="Wallace S.W."/>
            <person name="Magalhaes A."/>
            <person name="Hall A."/>
        </authorList>
    </citation>
    <scope>INTERACTION WITH PKN2</scope>
</reference>
<reference key="19">
    <citation type="journal article" date="2012" name="Cell Rep.">
        <title>POSH localizes activated Rac1 to control the formation of cytoplasmic dilation of the leading process and neuronal migration.</title>
        <authorList>
            <person name="Yang T."/>
            <person name="Sun Y."/>
            <person name="Zhang F."/>
            <person name="Zhu Y."/>
            <person name="Shi L."/>
            <person name="Li H."/>
            <person name="Xu Z."/>
        </authorList>
    </citation>
    <scope>SUBCELLULAR LOCATION</scope>
    <scope>INTERACTION WITH SH3RF1</scope>
    <scope>DEVELOPMENTAL STAGE</scope>
</reference>
<reference key="20">
    <citation type="journal article" date="2013" name="Eur. J. Immunol.">
        <title>The POSH/JIP-1 scaffold network regulates TCR-mediated JNK1 signals and effector function in CD8(+) T cells.</title>
        <authorList>
            <person name="Cunningham C.A."/>
            <person name="Knudson K.M."/>
            <person name="Peng B.J."/>
            <person name="Teixeiro E."/>
            <person name="Daniels M.A."/>
        </authorList>
    </citation>
    <scope>IDENTIFICATION IN A COMPLEX WITH SH3RF1; MAP2K7; MAP3K11; MAPK8IP1 AND MAPK8</scope>
</reference>
<reference key="21">
    <citation type="journal article" date="2014" name="J. Biol. Chem.">
        <title>Rho-GTPase-activating protein interacting with Cdc-42-interacting protein 4 homolog 2 (Rich2): a new Ras-related C3 botulinum toxin substrate 1 (Rac1) GTPase-activating protein that controls dendritic spine morphogenesis.</title>
        <authorList>
            <person name="Raynaud F."/>
            <person name="Moutin E."/>
            <person name="Schmidt S."/>
            <person name="Dahl J."/>
            <person name="Bertaso F."/>
            <person name="Boeckers T.M."/>
            <person name="Homburger V."/>
            <person name="Fagni L."/>
        </authorList>
    </citation>
    <scope>CATALYTIC ACTIVITY</scope>
    <scope>FUNCTION</scope>
    <scope>ACTIVITY REGULATION</scope>
    <scope>SUBCELLULAR LOCATION</scope>
</reference>
<reference key="22">
    <citation type="journal article" date="2016" name="Mol. Brain">
        <title>Enlarged dendritic spines and pronounced neophobia in mice lacking the PSD protein RICH2.</title>
        <authorList>
            <person name="Sarowar T."/>
            <person name="Grabrucker S."/>
            <person name="Foehr K."/>
            <person name="Mangus K."/>
            <person name="Eckert M."/>
            <person name="Bockmann J."/>
            <person name="Boeckers T.M."/>
            <person name="Grabrucker A.M."/>
        </authorList>
    </citation>
    <scope>CATALYTIC ACTIVITY</scope>
    <scope>FUNCTION</scope>
    <scope>ACTIVITY REGULATION</scope>
</reference>
<feature type="chain" id="PRO_0000042038" description="Ras-related C3 botulinum toxin substrate 1">
    <location>
        <begin position="1"/>
        <end position="189"/>
    </location>
</feature>
<feature type="propeptide" id="PRO_0000042039" description="Removed in mature form" evidence="1">
    <location>
        <begin position="190"/>
        <end position="192"/>
    </location>
</feature>
<feature type="short sequence motif" description="Effector region" evidence="3">
    <location>
        <begin position="32"/>
        <end position="40"/>
    </location>
</feature>
<feature type="short sequence motif" description="Polybasic region; required for nuclear import" evidence="1">
    <location>
        <begin position="179"/>
        <end position="188"/>
    </location>
</feature>
<feature type="binding site" evidence="1">
    <location>
        <position position="12"/>
    </location>
    <ligand>
        <name>GTP</name>
        <dbReference type="ChEBI" id="CHEBI:37565"/>
    </ligand>
</feature>
<feature type="binding site" evidence="1">
    <location>
        <position position="13"/>
    </location>
    <ligand>
        <name>GTP</name>
        <dbReference type="ChEBI" id="CHEBI:37565"/>
    </ligand>
</feature>
<feature type="binding site" evidence="1">
    <location>
        <position position="14"/>
    </location>
    <ligand>
        <name>GTP</name>
        <dbReference type="ChEBI" id="CHEBI:37565"/>
    </ligand>
</feature>
<feature type="binding site" evidence="1">
    <location>
        <position position="15"/>
    </location>
    <ligand>
        <name>GTP</name>
        <dbReference type="ChEBI" id="CHEBI:37565"/>
    </ligand>
</feature>
<feature type="binding site" evidence="1">
    <location>
        <position position="16"/>
    </location>
    <ligand>
        <name>GTP</name>
        <dbReference type="ChEBI" id="CHEBI:37565"/>
    </ligand>
</feature>
<feature type="binding site" evidence="1">
    <location>
        <position position="17"/>
    </location>
    <ligand>
        <name>GTP</name>
        <dbReference type="ChEBI" id="CHEBI:37565"/>
    </ligand>
</feature>
<feature type="binding site" evidence="1">
    <location>
        <position position="18"/>
    </location>
    <ligand>
        <name>GTP</name>
        <dbReference type="ChEBI" id="CHEBI:37565"/>
    </ligand>
</feature>
<feature type="binding site" evidence="1">
    <location>
        <position position="31"/>
    </location>
    <ligand>
        <name>GTP</name>
        <dbReference type="ChEBI" id="CHEBI:37565"/>
    </ligand>
</feature>
<feature type="binding site" evidence="1">
    <location>
        <position position="32"/>
    </location>
    <ligand>
        <name>GTP</name>
        <dbReference type="ChEBI" id="CHEBI:37565"/>
    </ligand>
</feature>
<feature type="binding site" evidence="1">
    <location>
        <position position="34"/>
    </location>
    <ligand>
        <name>GTP</name>
        <dbReference type="ChEBI" id="CHEBI:37565"/>
    </ligand>
</feature>
<feature type="binding site" evidence="1">
    <location>
        <position position="35"/>
    </location>
    <ligand>
        <name>GTP</name>
        <dbReference type="ChEBI" id="CHEBI:37565"/>
    </ligand>
</feature>
<feature type="binding site" evidence="1">
    <location>
        <position position="59"/>
    </location>
    <ligand>
        <name>GTP</name>
        <dbReference type="ChEBI" id="CHEBI:37565"/>
    </ligand>
</feature>
<feature type="binding site" evidence="1">
    <location>
        <position position="60"/>
    </location>
    <ligand>
        <name>GTP</name>
        <dbReference type="ChEBI" id="CHEBI:37565"/>
    </ligand>
</feature>
<feature type="binding site" evidence="1">
    <location>
        <position position="116"/>
    </location>
    <ligand>
        <name>GTP</name>
        <dbReference type="ChEBI" id="CHEBI:37565"/>
    </ligand>
</feature>
<feature type="binding site" evidence="1">
    <location>
        <position position="118"/>
    </location>
    <ligand>
        <name>GTP</name>
        <dbReference type="ChEBI" id="CHEBI:37565"/>
    </ligand>
</feature>
<feature type="binding site" evidence="1">
    <location>
        <position position="119"/>
    </location>
    <ligand>
        <name>GTP</name>
        <dbReference type="ChEBI" id="CHEBI:37565"/>
    </ligand>
</feature>
<feature type="binding site" evidence="1">
    <location>
        <position position="159"/>
    </location>
    <ligand>
        <name>GTP</name>
        <dbReference type="ChEBI" id="CHEBI:37565"/>
    </ligand>
</feature>
<feature type="binding site" evidence="1">
    <location>
        <position position="160"/>
    </location>
    <ligand>
        <name>GTP</name>
        <dbReference type="ChEBI" id="CHEBI:37565"/>
    </ligand>
</feature>
<feature type="modified residue" description="Phosphoserine" evidence="1">
    <location>
        <position position="71"/>
    </location>
</feature>
<feature type="modified residue" description="Cysteine methyl ester" evidence="1">
    <location>
        <position position="189"/>
    </location>
</feature>
<feature type="lipid moiety-binding region" description="S-geranylgeranyl cysteine" evidence="1">
    <location>
        <position position="189"/>
    </location>
</feature>
<feature type="cross-link" description="Glycyl lysine isopeptide (Lys-Gly) (interchain with G-Cter in ubiquitin)" evidence="1">
    <location>
        <position position="147"/>
    </location>
</feature>
<feature type="cross-link" description="Glycyl lysine isopeptide (Lys-Gly) (interchain with G-Cter in ubiquitin)" evidence="1">
    <location>
        <position position="166"/>
    </location>
</feature>
<feature type="mutagenesis site" description="Constitutively active. Interacts with PARD6 proteins." evidence="5">
    <original>G</original>
    <variation>V</variation>
    <location>
        <position position="12"/>
    </location>
</feature>
<organism>
    <name type="scientific">Mus musculus</name>
    <name type="common">Mouse</name>
    <dbReference type="NCBI Taxonomy" id="10090"/>
    <lineage>
        <taxon>Eukaryota</taxon>
        <taxon>Metazoa</taxon>
        <taxon>Chordata</taxon>
        <taxon>Craniata</taxon>
        <taxon>Vertebrata</taxon>
        <taxon>Euteleostomi</taxon>
        <taxon>Mammalia</taxon>
        <taxon>Eutheria</taxon>
        <taxon>Euarchontoglires</taxon>
        <taxon>Glires</taxon>
        <taxon>Rodentia</taxon>
        <taxon>Myomorpha</taxon>
        <taxon>Muroidea</taxon>
        <taxon>Muridae</taxon>
        <taxon>Murinae</taxon>
        <taxon>Mus</taxon>
        <taxon>Mus</taxon>
    </lineage>
</organism>
<keyword id="KW-1003">Cell membrane</keyword>
<keyword id="KW-0966">Cell projection</keyword>
<keyword id="KW-0963">Cytoplasm</keyword>
<keyword id="KW-0342">GTP-binding</keyword>
<keyword id="KW-0378">Hydrolase</keyword>
<keyword id="KW-1017">Isopeptide bond</keyword>
<keyword id="KW-0449">Lipoprotein</keyword>
<keyword id="KW-0472">Membrane</keyword>
<keyword id="KW-0488">Methylation</keyword>
<keyword id="KW-0547">Nucleotide-binding</keyword>
<keyword id="KW-0539">Nucleus</keyword>
<keyword id="KW-0597">Phosphoprotein</keyword>
<keyword id="KW-0636">Prenylation</keyword>
<keyword id="KW-1185">Reference proteome</keyword>
<keyword id="KW-0770">Synapse</keyword>
<keyword id="KW-0832">Ubl conjugation</keyword>
<gene>
    <name evidence="26" type="primary">Rac1</name>
</gene>
<proteinExistence type="evidence at protein level"/>
<sequence length="192" mass="21450">MQAIKCVVVGDGAVGKTCLLISYTTNAFPGEYIPTVFDNYSANVMVDGKPVNLGLWDTAGQEDYDRLRPLSYPQTDVFLICFSLVSPASFENVRAKWYPEVRHHCPNTPIILVGTKLDLRDDKDTIEKLKEKKLTPITYPQGLAMAKEIGAVKYLECSALTQRGLKTVFDEAIRAVLCPPPVKKRKRKCLLL</sequence>
<name>RAC1_MOUSE</name>
<dbReference type="EC" id="3.6.5.2" evidence="20 21"/>
<dbReference type="EMBL" id="X57277">
    <property type="protein sequence ID" value="CAA40545.1"/>
    <property type="molecule type" value="mRNA"/>
</dbReference>
<dbReference type="EMBL" id="AK009017">
    <property type="protein sequence ID" value="BAB26027.1"/>
    <property type="molecule type" value="mRNA"/>
</dbReference>
<dbReference type="EMBL" id="AK011072">
    <property type="protein sequence ID" value="BAB69451.1"/>
    <property type="molecule type" value="mRNA"/>
</dbReference>
<dbReference type="EMBL" id="AK034601">
    <property type="protein sequence ID" value="BAC28767.1"/>
    <property type="molecule type" value="mRNA"/>
</dbReference>
<dbReference type="EMBL" id="AK047969">
    <property type="protein sequence ID" value="BAC33203.1"/>
    <property type="molecule type" value="mRNA"/>
</dbReference>
<dbReference type="EMBL" id="AK088825">
    <property type="protein sequence ID" value="BAC40596.1"/>
    <property type="molecule type" value="mRNA"/>
</dbReference>
<dbReference type="EMBL" id="BC003828">
    <property type="protein sequence ID" value="AAH03828.1"/>
    <property type="molecule type" value="mRNA"/>
</dbReference>
<dbReference type="EMBL" id="BC051053">
    <property type="protein sequence ID" value="AAH51053.1"/>
    <property type="molecule type" value="mRNA"/>
</dbReference>
<dbReference type="CCDS" id="CCDS19843.1"/>
<dbReference type="PIR" id="A60347">
    <property type="entry name" value="A60347"/>
</dbReference>
<dbReference type="RefSeq" id="NP_033033.1">
    <property type="nucleotide sequence ID" value="NM_009007.2"/>
</dbReference>
<dbReference type="BMRB" id="P63001"/>
<dbReference type="SMR" id="P63001"/>
<dbReference type="BioGRID" id="202556">
    <property type="interactions" value="85"/>
</dbReference>
<dbReference type="CORUM" id="P63001"/>
<dbReference type="DIP" id="DIP-31545N"/>
<dbReference type="FunCoup" id="P63001">
    <property type="interactions" value="3199"/>
</dbReference>
<dbReference type="IntAct" id="P63001">
    <property type="interactions" value="50"/>
</dbReference>
<dbReference type="MINT" id="P63001"/>
<dbReference type="STRING" id="10090.ENSMUSP00000098058"/>
<dbReference type="BindingDB" id="P63001"/>
<dbReference type="ChEMBL" id="CHEMBL5628"/>
<dbReference type="GlyGen" id="P63001">
    <property type="glycosylation" value="1 site, 1 O-linked glycan (1 site)"/>
</dbReference>
<dbReference type="iPTMnet" id="P63001"/>
<dbReference type="MetOSite" id="P63001"/>
<dbReference type="PhosphoSitePlus" id="P63001"/>
<dbReference type="SwissPalm" id="P63001"/>
<dbReference type="jPOST" id="P63001"/>
<dbReference type="PaxDb" id="10090-ENSMUSP00000079380"/>
<dbReference type="ProteomicsDB" id="300344"/>
<dbReference type="Pumba" id="P63001"/>
<dbReference type="Antibodypedia" id="4545">
    <property type="antibodies" value="687 antibodies from 41 providers"/>
</dbReference>
<dbReference type="DNASU" id="19353"/>
<dbReference type="Ensembl" id="ENSMUST00000080537.14">
    <property type="protein sequence ID" value="ENSMUSP00000079380.8"/>
    <property type="gene ID" value="ENSMUSG00000001847.15"/>
</dbReference>
<dbReference type="GeneID" id="19353"/>
<dbReference type="KEGG" id="mmu:19353"/>
<dbReference type="UCSC" id="uc009akk.1">
    <property type="organism name" value="mouse"/>
</dbReference>
<dbReference type="AGR" id="MGI:97845"/>
<dbReference type="CTD" id="5879"/>
<dbReference type="MGI" id="MGI:97845">
    <property type="gene designation" value="Rac1"/>
</dbReference>
<dbReference type="VEuPathDB" id="HostDB:ENSMUSG00000001847"/>
<dbReference type="eggNOG" id="KOG0393">
    <property type="taxonomic scope" value="Eukaryota"/>
</dbReference>
<dbReference type="GeneTree" id="ENSGT00940000153500"/>
<dbReference type="HOGENOM" id="CLU_041217_21_3_1"/>
<dbReference type="InParanoid" id="P63001"/>
<dbReference type="OrthoDB" id="8830751at2759"/>
<dbReference type="PhylomeDB" id="P63001"/>
<dbReference type="TreeFam" id="TF101109"/>
<dbReference type="Reactome" id="R-MMU-114604">
    <property type="pathway name" value="GPVI-mediated activation cascade"/>
</dbReference>
<dbReference type="Reactome" id="R-MMU-1257604">
    <property type="pathway name" value="PIP3 activates AKT signaling"/>
</dbReference>
<dbReference type="Reactome" id="R-MMU-1433557">
    <property type="pathway name" value="Signaling by SCF-KIT"/>
</dbReference>
<dbReference type="Reactome" id="R-MMU-193648">
    <property type="pathway name" value="NRAGE signals death through JNK"/>
</dbReference>
<dbReference type="Reactome" id="R-MMU-2029482">
    <property type="pathway name" value="Regulation of actin dynamics for phagocytic cup formation"/>
</dbReference>
<dbReference type="Reactome" id="R-MMU-2424491">
    <property type="pathway name" value="DAP12 signaling"/>
</dbReference>
<dbReference type="Reactome" id="R-MMU-2871796">
    <property type="pathway name" value="FCERI mediated MAPK activation"/>
</dbReference>
<dbReference type="Reactome" id="R-MMU-389359">
    <property type="pathway name" value="CD28 dependent Vav1 pathway"/>
</dbReference>
<dbReference type="Reactome" id="R-MMU-3928662">
    <property type="pathway name" value="EPHB-mediated forward signaling"/>
</dbReference>
<dbReference type="Reactome" id="R-MMU-3928664">
    <property type="pathway name" value="Ephrin signaling"/>
</dbReference>
<dbReference type="Reactome" id="R-MMU-3928665">
    <property type="pathway name" value="EPH-ephrin mediated repulsion of cells"/>
</dbReference>
<dbReference type="Reactome" id="R-MMU-399954">
    <property type="pathway name" value="Sema3A PAK dependent Axon repulsion"/>
</dbReference>
<dbReference type="Reactome" id="R-MMU-4086400">
    <property type="pathway name" value="PCP/CE pathway"/>
</dbReference>
<dbReference type="Reactome" id="R-MMU-416550">
    <property type="pathway name" value="Sema4D mediated inhibition of cell attachment and migration"/>
</dbReference>
<dbReference type="Reactome" id="R-MMU-418885">
    <property type="pathway name" value="DCC mediated attractive signaling"/>
</dbReference>
<dbReference type="Reactome" id="R-MMU-4420097">
    <property type="pathway name" value="VEGFA-VEGFR2 Pathway"/>
</dbReference>
<dbReference type="Reactome" id="R-MMU-445144">
    <property type="pathway name" value="Signal transduction by L1"/>
</dbReference>
<dbReference type="Reactome" id="R-MMU-5218920">
    <property type="pathway name" value="VEGFR2 mediated vascular permeability"/>
</dbReference>
<dbReference type="Reactome" id="R-MMU-5625740">
    <property type="pathway name" value="RHO GTPases activate PKNs"/>
</dbReference>
<dbReference type="Reactome" id="R-MMU-5625900">
    <property type="pathway name" value="RHO GTPases activate CIT"/>
</dbReference>
<dbReference type="Reactome" id="R-MMU-5625970">
    <property type="pathway name" value="RHO GTPases activate KTN1"/>
</dbReference>
<dbReference type="Reactome" id="R-MMU-5626467">
    <property type="pathway name" value="RHO GTPases activate IQGAPs"/>
</dbReference>
<dbReference type="Reactome" id="R-MMU-5627123">
    <property type="pathway name" value="RHO GTPases activate PAKs"/>
</dbReference>
<dbReference type="Reactome" id="R-MMU-5663213">
    <property type="pathway name" value="RHO GTPases Activate WASPs and WAVEs"/>
</dbReference>
<dbReference type="Reactome" id="R-MMU-5663220">
    <property type="pathway name" value="RHO GTPases Activate Formins"/>
</dbReference>
<dbReference type="Reactome" id="R-MMU-5668599">
    <property type="pathway name" value="RHO GTPases Activate NADPH Oxidases"/>
</dbReference>
<dbReference type="Reactome" id="R-MMU-5687128">
    <property type="pathway name" value="MAPK6/MAPK4 signaling"/>
</dbReference>
<dbReference type="Reactome" id="R-MMU-6798695">
    <property type="pathway name" value="Neutrophil degranulation"/>
</dbReference>
<dbReference type="Reactome" id="R-MMU-6811558">
    <property type="pathway name" value="PI5P, PP2A and IER3 Regulate PI3K/AKT Signaling"/>
</dbReference>
<dbReference type="Reactome" id="R-MMU-8849471">
    <property type="pathway name" value="PTK6 Regulates RHO GTPases, RAS GTPase and MAP kinases"/>
</dbReference>
<dbReference type="Reactome" id="R-MMU-8875555">
    <property type="pathway name" value="MET activates RAP1 and RAC1"/>
</dbReference>
<dbReference type="Reactome" id="R-MMU-9013149">
    <property type="pathway name" value="RAC1 GTPase cycle"/>
</dbReference>
<dbReference type="Reactome" id="R-MMU-9032759">
    <property type="pathway name" value="NTRK2 activates RAC1"/>
</dbReference>
<dbReference type="Reactome" id="R-MMU-9748787">
    <property type="pathway name" value="Azathioprine ADME"/>
</dbReference>
<dbReference type="Reactome" id="R-MMU-983231">
    <property type="pathway name" value="Factors involved in megakaryocyte development and platelet production"/>
</dbReference>
<dbReference type="BioGRID-ORCS" id="19353">
    <property type="hits" value="18 hits in 77 CRISPR screens"/>
</dbReference>
<dbReference type="CD-CODE" id="CE726F99">
    <property type="entry name" value="Postsynaptic density"/>
</dbReference>
<dbReference type="ChiTaRS" id="Rac1">
    <property type="organism name" value="mouse"/>
</dbReference>
<dbReference type="PRO" id="PR:P63001"/>
<dbReference type="Proteomes" id="UP000000589">
    <property type="component" value="Chromosome 5"/>
</dbReference>
<dbReference type="RNAct" id="P63001">
    <property type="molecule type" value="protein"/>
</dbReference>
<dbReference type="Bgee" id="ENSMUSG00000001847">
    <property type="expression patterns" value="Expressed in metanephric loop of Henle and 285 other cell types or tissues"/>
</dbReference>
<dbReference type="ExpressionAtlas" id="P63001">
    <property type="expression patterns" value="baseline and differential"/>
</dbReference>
<dbReference type="GO" id="GO:0005884">
    <property type="term" value="C:actin filament"/>
    <property type="evidence" value="ECO:0007669"/>
    <property type="project" value="Ensembl"/>
</dbReference>
<dbReference type="GO" id="GO:0005938">
    <property type="term" value="C:cell cortex"/>
    <property type="evidence" value="ECO:0007669"/>
    <property type="project" value="Ensembl"/>
</dbReference>
<dbReference type="GO" id="GO:0042995">
    <property type="term" value="C:cell projection"/>
    <property type="evidence" value="ECO:0000314"/>
    <property type="project" value="MGI"/>
</dbReference>
<dbReference type="GO" id="GO:0005737">
    <property type="term" value="C:cytoplasm"/>
    <property type="evidence" value="ECO:0000314"/>
    <property type="project" value="UniProtKB"/>
</dbReference>
<dbReference type="GO" id="GO:0036464">
    <property type="term" value="C:cytoplasmic ribonucleoprotein granule"/>
    <property type="evidence" value="ECO:0007669"/>
    <property type="project" value="Ensembl"/>
</dbReference>
<dbReference type="GO" id="GO:0031410">
    <property type="term" value="C:cytoplasmic vesicle"/>
    <property type="evidence" value="ECO:0000314"/>
    <property type="project" value="MGI"/>
</dbReference>
<dbReference type="GO" id="GO:0005829">
    <property type="term" value="C:cytosol"/>
    <property type="evidence" value="ECO:0000250"/>
    <property type="project" value="UniProtKB"/>
</dbReference>
<dbReference type="GO" id="GO:0030425">
    <property type="term" value="C:dendrite"/>
    <property type="evidence" value="ECO:0007669"/>
    <property type="project" value="UniProtKB-SubCell"/>
</dbReference>
<dbReference type="GO" id="GO:0031901">
    <property type="term" value="C:early endosome membrane"/>
    <property type="evidence" value="ECO:0000314"/>
    <property type="project" value="UniProtKB"/>
</dbReference>
<dbReference type="GO" id="GO:0098978">
    <property type="term" value="C:glutamatergic synapse"/>
    <property type="evidence" value="ECO:0000314"/>
    <property type="project" value="SynGO"/>
</dbReference>
<dbReference type="GO" id="GO:0060091">
    <property type="term" value="C:kinocilium"/>
    <property type="evidence" value="ECO:0000314"/>
    <property type="project" value="MGI"/>
</dbReference>
<dbReference type="GO" id="GO:0030027">
    <property type="term" value="C:lamellipodium"/>
    <property type="evidence" value="ECO:0000314"/>
    <property type="project" value="UniProtKB"/>
</dbReference>
<dbReference type="GO" id="GO:0042470">
    <property type="term" value="C:melanosome"/>
    <property type="evidence" value="ECO:0007669"/>
    <property type="project" value="UniProtKB-SubCell"/>
</dbReference>
<dbReference type="GO" id="GO:0016020">
    <property type="term" value="C:membrane"/>
    <property type="evidence" value="ECO:0000314"/>
    <property type="project" value="MGI"/>
</dbReference>
<dbReference type="GO" id="GO:0043020">
    <property type="term" value="C:NADPH oxidase complex"/>
    <property type="evidence" value="ECO:0007669"/>
    <property type="project" value="Ensembl"/>
</dbReference>
<dbReference type="GO" id="GO:0005634">
    <property type="term" value="C:nucleus"/>
    <property type="evidence" value="ECO:0000314"/>
    <property type="project" value="UniProtKB"/>
</dbReference>
<dbReference type="GO" id="GO:0000242">
    <property type="term" value="C:pericentriolar material"/>
    <property type="evidence" value="ECO:0000314"/>
    <property type="project" value="MGI"/>
</dbReference>
<dbReference type="GO" id="GO:0001891">
    <property type="term" value="C:phagocytic cup"/>
    <property type="evidence" value="ECO:0000314"/>
    <property type="project" value="UniProtKB"/>
</dbReference>
<dbReference type="GO" id="GO:0005886">
    <property type="term" value="C:plasma membrane"/>
    <property type="evidence" value="ECO:0000314"/>
    <property type="project" value="UniProtKB"/>
</dbReference>
<dbReference type="GO" id="GO:0045211">
    <property type="term" value="C:postsynaptic membrane"/>
    <property type="evidence" value="ECO:0000314"/>
    <property type="project" value="SynGO"/>
</dbReference>
<dbReference type="GO" id="GO:0042734">
    <property type="term" value="C:presynaptic membrane"/>
    <property type="evidence" value="ECO:0000314"/>
    <property type="project" value="SynGO"/>
</dbReference>
<dbReference type="GO" id="GO:0055038">
    <property type="term" value="C:recycling endosome membrane"/>
    <property type="evidence" value="ECO:0007669"/>
    <property type="project" value="Ensembl"/>
</dbReference>
<dbReference type="GO" id="GO:0032587">
    <property type="term" value="C:ruffle membrane"/>
    <property type="evidence" value="ECO:0000314"/>
    <property type="project" value="UniProtKB"/>
</dbReference>
<dbReference type="GO" id="GO:0030672">
    <property type="term" value="C:synaptic vesicle membrane"/>
    <property type="evidence" value="ECO:0000314"/>
    <property type="project" value="SynGO"/>
</dbReference>
<dbReference type="GO" id="GO:0005802">
    <property type="term" value="C:trans-Golgi network"/>
    <property type="evidence" value="ECO:0007669"/>
    <property type="project" value="Ensembl"/>
</dbReference>
<dbReference type="GO" id="GO:0003925">
    <property type="term" value="F:G protein activity"/>
    <property type="evidence" value="ECO:0000314"/>
    <property type="project" value="MGI"/>
</dbReference>
<dbReference type="GO" id="GO:0005525">
    <property type="term" value="F:GTP binding"/>
    <property type="evidence" value="ECO:0000314"/>
    <property type="project" value="MGI"/>
</dbReference>
<dbReference type="GO" id="GO:0030742">
    <property type="term" value="F:GTP-dependent protein binding"/>
    <property type="evidence" value="ECO:0000353"/>
    <property type="project" value="UniProtKB"/>
</dbReference>
<dbReference type="GO" id="GO:0003924">
    <property type="term" value="F:GTPase activity"/>
    <property type="evidence" value="ECO:0000314"/>
    <property type="project" value="MGI"/>
</dbReference>
<dbReference type="GO" id="GO:0019901">
    <property type="term" value="F:protein kinase binding"/>
    <property type="evidence" value="ECO:0007669"/>
    <property type="project" value="Ensembl"/>
</dbReference>
<dbReference type="GO" id="GO:0044877">
    <property type="term" value="F:protein-containing complex binding"/>
    <property type="evidence" value="ECO:0007669"/>
    <property type="project" value="Ensembl"/>
</dbReference>
<dbReference type="GO" id="GO:0051022">
    <property type="term" value="F:Rho GDP-dissociation inhibitor binding"/>
    <property type="evidence" value="ECO:0000250"/>
    <property type="project" value="UniProtKB"/>
</dbReference>
<dbReference type="GO" id="GO:0031996">
    <property type="term" value="F:thioesterase binding"/>
    <property type="evidence" value="ECO:0007669"/>
    <property type="project" value="Ensembl"/>
</dbReference>
<dbReference type="GO" id="GO:0030036">
    <property type="term" value="P:actin cytoskeleton organization"/>
    <property type="evidence" value="ECO:0000266"/>
    <property type="project" value="MGI"/>
</dbReference>
<dbReference type="GO" id="GO:0030041">
    <property type="term" value="P:actin filament polymerization"/>
    <property type="evidence" value="ECO:0000314"/>
    <property type="project" value="MGI"/>
</dbReference>
<dbReference type="GO" id="GO:0048532">
    <property type="term" value="P:anatomical structure arrangement"/>
    <property type="evidence" value="ECO:0000315"/>
    <property type="project" value="MGI"/>
</dbReference>
<dbReference type="GO" id="GO:0086098">
    <property type="term" value="P:angiotensin-activated signaling pathway involved in heart process"/>
    <property type="evidence" value="ECO:0000314"/>
    <property type="project" value="MGI"/>
</dbReference>
<dbReference type="GO" id="GO:0002093">
    <property type="term" value="P:auditory receptor cell morphogenesis"/>
    <property type="evidence" value="ECO:0000315"/>
    <property type="project" value="MGI"/>
</dbReference>
<dbReference type="GO" id="GO:0007411">
    <property type="term" value="P:axon guidance"/>
    <property type="evidence" value="ECO:0000315"/>
    <property type="project" value="MGI"/>
</dbReference>
<dbReference type="GO" id="GO:0007155">
    <property type="term" value="P:cell adhesion"/>
    <property type="evidence" value="ECO:0000314"/>
    <property type="project" value="MGI"/>
</dbReference>
<dbReference type="GO" id="GO:0016477">
    <property type="term" value="P:cell migration"/>
    <property type="evidence" value="ECO:0000314"/>
    <property type="project" value="MGI"/>
</dbReference>
<dbReference type="GO" id="GO:0048870">
    <property type="term" value="P:cell motility"/>
    <property type="evidence" value="ECO:0000250"/>
    <property type="project" value="UniProtKB"/>
</dbReference>
<dbReference type="GO" id="GO:0045216">
    <property type="term" value="P:cell-cell junction organization"/>
    <property type="evidence" value="ECO:0000315"/>
    <property type="project" value="MGI"/>
</dbReference>
<dbReference type="GO" id="GO:0021894">
    <property type="term" value="P:cerebral cortex GABAergic interneuron development"/>
    <property type="evidence" value="ECO:0000316"/>
    <property type="project" value="MGI"/>
</dbReference>
<dbReference type="GO" id="GO:0021799">
    <property type="term" value="P:cerebral cortex radially oriented cell migration"/>
    <property type="evidence" value="ECO:0000315"/>
    <property type="project" value="MGI"/>
</dbReference>
<dbReference type="GO" id="GO:0090103">
    <property type="term" value="P:cochlea morphogenesis"/>
    <property type="evidence" value="ECO:0000315"/>
    <property type="project" value="MGI"/>
</dbReference>
<dbReference type="GO" id="GO:0007010">
    <property type="term" value="P:cytoskeleton organization"/>
    <property type="evidence" value="ECO:0000314"/>
    <property type="project" value="MGI"/>
</dbReference>
<dbReference type="GO" id="GO:0016358">
    <property type="term" value="P:dendrite development"/>
    <property type="evidence" value="ECO:0000314"/>
    <property type="project" value="MGI"/>
</dbReference>
<dbReference type="GO" id="GO:0048813">
    <property type="term" value="P:dendrite morphogenesis"/>
    <property type="evidence" value="ECO:0000316"/>
    <property type="project" value="MGI"/>
</dbReference>
<dbReference type="GO" id="GO:0071542">
    <property type="term" value="P:dopaminergic neuron differentiation"/>
    <property type="evidence" value="ECO:0000316"/>
    <property type="project" value="MGI"/>
</dbReference>
<dbReference type="GO" id="GO:0021831">
    <property type="term" value="P:embryonic olfactory bulb interneuron precursor migration"/>
    <property type="evidence" value="ECO:0000315"/>
    <property type="project" value="MGI"/>
</dbReference>
<dbReference type="GO" id="GO:0006897">
    <property type="term" value="P:endocytosis"/>
    <property type="evidence" value="ECO:0000314"/>
    <property type="project" value="MGI"/>
</dbReference>
<dbReference type="GO" id="GO:0043652">
    <property type="term" value="P:engulfment of apoptotic cell"/>
    <property type="evidence" value="ECO:0000314"/>
    <property type="project" value="BHF-UCL"/>
</dbReference>
<dbReference type="GO" id="GO:0007167">
    <property type="term" value="P:enzyme-linked receptor protein signaling pathway"/>
    <property type="evidence" value="ECO:0000316"/>
    <property type="project" value="MGI"/>
</dbReference>
<dbReference type="GO" id="GO:0003382">
    <property type="term" value="P:epithelial cell morphogenesis"/>
    <property type="evidence" value="ECO:0000315"/>
    <property type="project" value="MGI"/>
</dbReference>
<dbReference type="GO" id="GO:0043131">
    <property type="term" value="P:erythrocyte enucleation"/>
    <property type="evidence" value="ECO:0000315"/>
    <property type="project" value="MGI"/>
</dbReference>
<dbReference type="GO" id="GO:0030900">
    <property type="term" value="P:forebrain development"/>
    <property type="evidence" value="ECO:0000314"/>
    <property type="project" value="UniProtKB"/>
</dbReference>
<dbReference type="GO" id="GO:0007186">
    <property type="term" value="P:G protein-coupled receptor signaling pathway"/>
    <property type="evidence" value="ECO:0000316"/>
    <property type="project" value="MGI"/>
</dbReference>
<dbReference type="GO" id="GO:0048012">
    <property type="term" value="P:hepatocyte growth factor receptor signaling pathway"/>
    <property type="evidence" value="ECO:0007669"/>
    <property type="project" value="Ensembl"/>
</dbReference>
<dbReference type="GO" id="GO:0048873">
    <property type="term" value="P:homeostasis of number of cells within a tissue"/>
    <property type="evidence" value="ECO:0000316"/>
    <property type="project" value="MGI"/>
</dbReference>
<dbReference type="GO" id="GO:0006972">
    <property type="term" value="P:hyperosmotic response"/>
    <property type="evidence" value="ECO:0000314"/>
    <property type="project" value="MGI"/>
</dbReference>
<dbReference type="GO" id="GO:1904936">
    <property type="term" value="P:interneuron migration"/>
    <property type="evidence" value="ECO:0000315"/>
    <property type="project" value="MGI"/>
</dbReference>
<dbReference type="GO" id="GO:0030032">
    <property type="term" value="P:lamellipodium assembly"/>
    <property type="evidence" value="ECO:0000314"/>
    <property type="project" value="MGI"/>
</dbReference>
<dbReference type="GO" id="GO:1904948">
    <property type="term" value="P:midbrain dopaminergic neuron differentiation"/>
    <property type="evidence" value="ECO:0000315"/>
    <property type="project" value="ParkinsonsUK-UCL"/>
</dbReference>
<dbReference type="GO" id="GO:0010764">
    <property type="term" value="P:negative regulation of fibroblast migration"/>
    <property type="evidence" value="ECO:0007669"/>
    <property type="project" value="Ensembl"/>
</dbReference>
<dbReference type="GO" id="GO:0032707">
    <property type="term" value="P:negative regulation of interleukin-23 production"/>
    <property type="evidence" value="ECO:0007669"/>
    <property type="project" value="Ensembl"/>
</dbReference>
<dbReference type="GO" id="GO:0001764">
    <property type="term" value="P:neuron migration"/>
    <property type="evidence" value="ECO:0000315"/>
    <property type="project" value="UniProtKB"/>
</dbReference>
<dbReference type="GO" id="GO:0048812">
    <property type="term" value="P:neuron projection morphogenesis"/>
    <property type="evidence" value="ECO:0000316"/>
    <property type="project" value="ParkinsonsUK-UCL"/>
</dbReference>
<dbReference type="GO" id="GO:0035567">
    <property type="term" value="P:non-canonical Wnt signaling pathway"/>
    <property type="evidence" value="ECO:0000316"/>
    <property type="project" value="ParkinsonsUK-UCL"/>
</dbReference>
<dbReference type="GO" id="GO:0006911">
    <property type="term" value="P:phagocytosis, engulfment"/>
    <property type="evidence" value="ECO:0000315"/>
    <property type="project" value="UniProtKB"/>
</dbReference>
<dbReference type="GO" id="GO:0030838">
    <property type="term" value="P:positive regulation of actin filament polymerization"/>
    <property type="evidence" value="ECO:0000314"/>
    <property type="project" value="MGI"/>
</dbReference>
<dbReference type="GO" id="GO:1903348">
    <property type="term" value="P:positive regulation of bicellular tight junction assembly"/>
    <property type="evidence" value="ECO:0000250"/>
    <property type="project" value="UniProtKB"/>
</dbReference>
<dbReference type="GO" id="GO:0060999">
    <property type="term" value="P:positive regulation of dendritic spine development"/>
    <property type="evidence" value="ECO:0000315"/>
    <property type="project" value="MGI"/>
</dbReference>
<dbReference type="GO" id="GO:0010595">
    <property type="term" value="P:positive regulation of endothelial cell migration"/>
    <property type="evidence" value="ECO:0007669"/>
    <property type="project" value="Ensembl"/>
</dbReference>
<dbReference type="GO" id="GO:0051894">
    <property type="term" value="P:positive regulation of focal adhesion assembly"/>
    <property type="evidence" value="ECO:0007669"/>
    <property type="project" value="Ensembl"/>
</dbReference>
<dbReference type="GO" id="GO:0035774">
    <property type="term" value="P:positive regulation of insulin secretion involved in cellular response to glucose stimulus"/>
    <property type="evidence" value="ECO:0000315"/>
    <property type="project" value="CACAO"/>
</dbReference>
<dbReference type="GO" id="GO:0010592">
    <property type="term" value="P:positive regulation of lamellipodium assembly"/>
    <property type="evidence" value="ECO:0000266"/>
    <property type="project" value="MGI"/>
</dbReference>
<dbReference type="GO" id="GO:0031116">
    <property type="term" value="P:positive regulation of microtubule polymerization"/>
    <property type="evidence" value="ECO:0007669"/>
    <property type="project" value="Ensembl"/>
</dbReference>
<dbReference type="GO" id="GO:0090023">
    <property type="term" value="P:positive regulation of neutrophil chemotaxis"/>
    <property type="evidence" value="ECO:0000315"/>
    <property type="project" value="UniProtKB"/>
</dbReference>
<dbReference type="GO" id="GO:2000386">
    <property type="term" value="P:positive regulation of ovarian follicle development"/>
    <property type="evidence" value="ECO:0000315"/>
    <property type="project" value="CACAO"/>
</dbReference>
<dbReference type="GO" id="GO:0051897">
    <property type="term" value="P:positive regulation of phosphatidylinositol 3-kinase/protein kinase B signal transduction"/>
    <property type="evidence" value="ECO:0000315"/>
    <property type="project" value="MGI"/>
</dbReference>
<dbReference type="GO" id="GO:0001934">
    <property type="term" value="P:positive regulation of protein phosphorylation"/>
    <property type="evidence" value="ECO:0000250"/>
    <property type="project" value="UniProtKB"/>
</dbReference>
<dbReference type="GO" id="GO:1904395">
    <property type="term" value="P:positive regulation of skeletal muscle acetylcholine-gated channel clustering"/>
    <property type="evidence" value="ECO:0000316"/>
    <property type="project" value="MGI"/>
</dbReference>
<dbReference type="GO" id="GO:0051496">
    <property type="term" value="P:positive regulation of stress fiber assembly"/>
    <property type="evidence" value="ECO:0007669"/>
    <property type="project" value="Ensembl"/>
</dbReference>
<dbReference type="GO" id="GO:1900026">
    <property type="term" value="P:positive regulation of substrate adhesion-dependent cell spreading"/>
    <property type="evidence" value="ECO:0007669"/>
    <property type="project" value="Ensembl"/>
</dbReference>
<dbReference type="GO" id="GO:0072659">
    <property type="term" value="P:protein localization to plasma membrane"/>
    <property type="evidence" value="ECO:0000314"/>
    <property type="project" value="MGI"/>
</dbReference>
<dbReference type="GO" id="GO:0016601">
    <property type="term" value="P:Rac protein signal transduction"/>
    <property type="evidence" value="ECO:0000316"/>
    <property type="project" value="MGI"/>
</dbReference>
<dbReference type="GO" id="GO:0061344">
    <property type="term" value="P:regulation of cell adhesion involved in heart morphogenesis"/>
    <property type="evidence" value="ECO:0000315"/>
    <property type="project" value="CACAO"/>
</dbReference>
<dbReference type="GO" id="GO:0022604">
    <property type="term" value="P:regulation of cell morphogenesis"/>
    <property type="evidence" value="ECO:0000316"/>
    <property type="project" value="MGI"/>
</dbReference>
<dbReference type="GO" id="GO:0008361">
    <property type="term" value="P:regulation of cell size"/>
    <property type="evidence" value="ECO:0007669"/>
    <property type="project" value="Ensembl"/>
</dbReference>
<dbReference type="GO" id="GO:0070376">
    <property type="term" value="P:regulation of ERK5 cascade"/>
    <property type="evidence" value="ECO:0000314"/>
    <property type="project" value="MGI"/>
</dbReference>
<dbReference type="GO" id="GO:0010762">
    <property type="term" value="P:regulation of fibroblast migration"/>
    <property type="evidence" value="ECO:0000315"/>
    <property type="project" value="UniProtKB"/>
</dbReference>
<dbReference type="GO" id="GO:0014041">
    <property type="term" value="P:regulation of neuron maturation"/>
    <property type="evidence" value="ECO:0000316"/>
    <property type="project" value="MGI"/>
</dbReference>
<dbReference type="GO" id="GO:2001222">
    <property type="term" value="P:regulation of neuron migration"/>
    <property type="evidence" value="ECO:0000315"/>
    <property type="project" value="MGI"/>
</dbReference>
<dbReference type="GO" id="GO:0048168">
    <property type="term" value="P:regulation of neuronal synaptic plasticity"/>
    <property type="evidence" value="ECO:0000315"/>
    <property type="project" value="MGI"/>
</dbReference>
<dbReference type="GO" id="GO:0150052">
    <property type="term" value="P:regulation of postsynapse assembly"/>
    <property type="evidence" value="ECO:0000314"/>
    <property type="project" value="SynGO"/>
</dbReference>
<dbReference type="GO" id="GO:0046425">
    <property type="term" value="P:regulation of receptor signaling pathway via JAK-STAT"/>
    <property type="evidence" value="ECO:0000315"/>
    <property type="project" value="CACAO"/>
</dbReference>
<dbReference type="GO" id="GO:0060263">
    <property type="term" value="P:regulation of respiratory burst"/>
    <property type="evidence" value="ECO:0007669"/>
    <property type="project" value="Ensembl"/>
</dbReference>
<dbReference type="GO" id="GO:1900242">
    <property type="term" value="P:regulation of synaptic vesicle endocytosis"/>
    <property type="evidence" value="ECO:0000314"/>
    <property type="project" value="SynGO"/>
</dbReference>
<dbReference type="GO" id="GO:0032496">
    <property type="term" value="P:response to lipopolysaccharide"/>
    <property type="evidence" value="ECO:0000314"/>
    <property type="project" value="UniProt"/>
</dbReference>
<dbReference type="GO" id="GO:0097178">
    <property type="term" value="P:ruffle assembly"/>
    <property type="evidence" value="ECO:0000315"/>
    <property type="project" value="UniProtKB"/>
</dbReference>
<dbReference type="GO" id="GO:0031529">
    <property type="term" value="P:ruffle organization"/>
    <property type="evidence" value="ECO:0000266"/>
    <property type="project" value="MGI"/>
</dbReference>
<dbReference type="GO" id="GO:0071526">
    <property type="term" value="P:semaphorin-plexin signaling pathway"/>
    <property type="evidence" value="ECO:0000250"/>
    <property type="project" value="UniProtKB"/>
</dbReference>
<dbReference type="GO" id="GO:0007264">
    <property type="term" value="P:small GTPase-mediated signal transduction"/>
    <property type="evidence" value="ECO:0000314"/>
    <property type="project" value="MGI"/>
</dbReference>
<dbReference type="GO" id="GO:0003376">
    <property type="term" value="P:sphingosine-1-phosphate receptor signaling pathway"/>
    <property type="evidence" value="ECO:0007669"/>
    <property type="project" value="Ensembl"/>
</dbReference>
<dbReference type="GO" id="GO:0034446">
    <property type="term" value="P:substrate adhesion-dependent cell spreading"/>
    <property type="evidence" value="ECO:0000314"/>
    <property type="project" value="MGI"/>
</dbReference>
<dbReference type="GO" id="GO:0042554">
    <property type="term" value="P:superoxide anion generation"/>
    <property type="evidence" value="ECO:0007669"/>
    <property type="project" value="Ensembl"/>
</dbReference>
<dbReference type="GO" id="GO:0051932">
    <property type="term" value="P:synaptic transmission, GABAergic"/>
    <property type="evidence" value="ECO:0000316"/>
    <property type="project" value="MGI"/>
</dbReference>
<dbReference type="GO" id="GO:0060071">
    <property type="term" value="P:Wnt signaling pathway, planar cell polarity pathway"/>
    <property type="evidence" value="ECO:0000316"/>
    <property type="project" value="MGI"/>
</dbReference>
<dbReference type="CDD" id="cd01871">
    <property type="entry name" value="Rac1_like"/>
    <property type="match status" value="1"/>
</dbReference>
<dbReference type="FunFam" id="3.40.50.300:FF:000088">
    <property type="entry name" value="Ras-related C3 botulinum toxin substrate 1"/>
    <property type="match status" value="1"/>
</dbReference>
<dbReference type="Gene3D" id="3.40.50.300">
    <property type="entry name" value="P-loop containing nucleotide triphosphate hydrolases"/>
    <property type="match status" value="1"/>
</dbReference>
<dbReference type="InterPro" id="IPR027417">
    <property type="entry name" value="P-loop_NTPase"/>
</dbReference>
<dbReference type="InterPro" id="IPR005225">
    <property type="entry name" value="Small_GTP-bd"/>
</dbReference>
<dbReference type="InterPro" id="IPR001806">
    <property type="entry name" value="Small_GTPase"/>
</dbReference>
<dbReference type="InterPro" id="IPR003578">
    <property type="entry name" value="Small_GTPase_Rho"/>
</dbReference>
<dbReference type="NCBIfam" id="TIGR00231">
    <property type="entry name" value="small_GTP"/>
    <property type="match status" value="1"/>
</dbReference>
<dbReference type="PANTHER" id="PTHR24072">
    <property type="entry name" value="RHO FAMILY GTPASE"/>
    <property type="match status" value="1"/>
</dbReference>
<dbReference type="Pfam" id="PF00071">
    <property type="entry name" value="Ras"/>
    <property type="match status" value="1"/>
</dbReference>
<dbReference type="PRINTS" id="PR00449">
    <property type="entry name" value="RASTRNSFRMNG"/>
</dbReference>
<dbReference type="SMART" id="SM00175">
    <property type="entry name" value="RAB"/>
    <property type="match status" value="1"/>
</dbReference>
<dbReference type="SMART" id="SM00173">
    <property type="entry name" value="RAS"/>
    <property type="match status" value="1"/>
</dbReference>
<dbReference type="SMART" id="SM00174">
    <property type="entry name" value="RHO"/>
    <property type="match status" value="1"/>
</dbReference>
<dbReference type="SUPFAM" id="SSF52540">
    <property type="entry name" value="P-loop containing nucleoside triphosphate hydrolases"/>
    <property type="match status" value="1"/>
</dbReference>
<dbReference type="PROSITE" id="PS51420">
    <property type="entry name" value="RHO"/>
    <property type="match status" value="1"/>
</dbReference>